<accession>Q9RKA8</accession>
<dbReference type="EC" id="4.6.1.17" evidence="1"/>
<dbReference type="EMBL" id="AL939115">
    <property type="protein sequence ID" value="CAB59676.1"/>
    <property type="molecule type" value="Genomic_DNA"/>
</dbReference>
<dbReference type="RefSeq" id="NP_627395.1">
    <property type="nucleotide sequence ID" value="NC_003888.3"/>
</dbReference>
<dbReference type="RefSeq" id="WP_011028813.1">
    <property type="nucleotide sequence ID" value="NZ_VNID01000013.1"/>
</dbReference>
<dbReference type="SMR" id="Q9RKA8"/>
<dbReference type="FunCoup" id="Q9RKA8">
    <property type="interactions" value="118"/>
</dbReference>
<dbReference type="STRING" id="100226.gene:17760798"/>
<dbReference type="PaxDb" id="100226-SCO3180"/>
<dbReference type="GeneID" id="91385797"/>
<dbReference type="KEGG" id="sco:SCO3180"/>
<dbReference type="PATRIC" id="fig|100226.15.peg.3240"/>
<dbReference type="eggNOG" id="COG0315">
    <property type="taxonomic scope" value="Bacteria"/>
</dbReference>
<dbReference type="HOGENOM" id="CLU_074693_1_1_11"/>
<dbReference type="InParanoid" id="Q9RKA8"/>
<dbReference type="OrthoDB" id="9794429at2"/>
<dbReference type="PhylomeDB" id="Q9RKA8"/>
<dbReference type="UniPathway" id="UPA00344"/>
<dbReference type="Proteomes" id="UP000001973">
    <property type="component" value="Chromosome"/>
</dbReference>
<dbReference type="GO" id="GO:0061799">
    <property type="term" value="F:cyclic pyranopterin monophosphate synthase activity"/>
    <property type="evidence" value="ECO:0007669"/>
    <property type="project" value="UniProtKB-UniRule"/>
</dbReference>
<dbReference type="GO" id="GO:0006777">
    <property type="term" value="P:Mo-molybdopterin cofactor biosynthetic process"/>
    <property type="evidence" value="ECO:0007669"/>
    <property type="project" value="UniProtKB-UniRule"/>
</dbReference>
<dbReference type="CDD" id="cd01420">
    <property type="entry name" value="MoaC_PE"/>
    <property type="match status" value="1"/>
</dbReference>
<dbReference type="Gene3D" id="3.30.70.640">
    <property type="entry name" value="Molybdopterin cofactor biosynthesis C (MoaC) domain"/>
    <property type="match status" value="1"/>
</dbReference>
<dbReference type="HAMAP" id="MF_01224_B">
    <property type="entry name" value="MoaC_B"/>
    <property type="match status" value="1"/>
</dbReference>
<dbReference type="InterPro" id="IPR023045">
    <property type="entry name" value="MoaC"/>
</dbReference>
<dbReference type="InterPro" id="IPR047594">
    <property type="entry name" value="MoaC_bact/euk"/>
</dbReference>
<dbReference type="InterPro" id="IPR036522">
    <property type="entry name" value="MoaC_sf"/>
</dbReference>
<dbReference type="InterPro" id="IPR050105">
    <property type="entry name" value="MoCo_biosynth_MoaA/MoaC"/>
</dbReference>
<dbReference type="InterPro" id="IPR002820">
    <property type="entry name" value="Mopterin_CF_biosynth-C_dom"/>
</dbReference>
<dbReference type="NCBIfam" id="TIGR00581">
    <property type="entry name" value="moaC"/>
    <property type="match status" value="1"/>
</dbReference>
<dbReference type="NCBIfam" id="NF006870">
    <property type="entry name" value="PRK09364.1"/>
    <property type="match status" value="1"/>
</dbReference>
<dbReference type="PANTHER" id="PTHR22960:SF29">
    <property type="entry name" value="CYCLIC PYRANOPTERIN MONOPHOSPHATE SYNTHASE"/>
    <property type="match status" value="1"/>
</dbReference>
<dbReference type="PANTHER" id="PTHR22960">
    <property type="entry name" value="MOLYBDOPTERIN COFACTOR SYNTHESIS PROTEIN A"/>
    <property type="match status" value="1"/>
</dbReference>
<dbReference type="Pfam" id="PF01967">
    <property type="entry name" value="MoaC"/>
    <property type="match status" value="1"/>
</dbReference>
<dbReference type="SUPFAM" id="SSF55040">
    <property type="entry name" value="Molybdenum cofactor biosynthesis protein C, MoaC"/>
    <property type="match status" value="1"/>
</dbReference>
<keyword id="KW-0456">Lyase</keyword>
<keyword id="KW-0501">Molybdenum cofactor biosynthesis</keyword>
<keyword id="KW-1185">Reference proteome</keyword>
<comment type="function">
    <text evidence="1">Catalyzes the conversion of (8S)-3',8-cyclo-7,8-dihydroguanosine 5'-triphosphate to cyclic pyranopterin monophosphate (cPMP).</text>
</comment>
<comment type="catalytic activity">
    <reaction evidence="1">
        <text>(8S)-3',8-cyclo-7,8-dihydroguanosine 5'-triphosphate = cyclic pyranopterin phosphate + diphosphate</text>
        <dbReference type="Rhea" id="RHEA:49580"/>
        <dbReference type="ChEBI" id="CHEBI:33019"/>
        <dbReference type="ChEBI" id="CHEBI:59648"/>
        <dbReference type="ChEBI" id="CHEBI:131766"/>
        <dbReference type="EC" id="4.6.1.17"/>
    </reaction>
</comment>
<comment type="pathway">
    <text evidence="1">Cofactor biosynthesis; molybdopterin biosynthesis.</text>
</comment>
<comment type="subunit">
    <text evidence="1">Homohexamer; trimer of dimers.</text>
</comment>
<comment type="similarity">
    <text evidence="1">Belongs to the MoaC family.</text>
</comment>
<sequence length="170" mass="17685">MSTQDRPSGSGQDPQDRLTHIDEAGAARMVDVSGKDVTARTARASGRVLVAPRVVELLRGEGVPKGDALATARIAGIMGAKRTPDLIPLCHPLSVSGVKLDLSVADDAVEITATVRTTDRTGVEMEALTAVSVAALTVVDMVKAVDKGAVITDVRVEQKTGGKSGDWTRS</sequence>
<organism>
    <name type="scientific">Streptomyces coelicolor (strain ATCC BAA-471 / A3(2) / M145)</name>
    <dbReference type="NCBI Taxonomy" id="100226"/>
    <lineage>
        <taxon>Bacteria</taxon>
        <taxon>Bacillati</taxon>
        <taxon>Actinomycetota</taxon>
        <taxon>Actinomycetes</taxon>
        <taxon>Kitasatosporales</taxon>
        <taxon>Streptomycetaceae</taxon>
        <taxon>Streptomyces</taxon>
        <taxon>Streptomyces albidoflavus group</taxon>
    </lineage>
</organism>
<proteinExistence type="inferred from homology"/>
<name>MOAC_STRCO</name>
<feature type="chain" id="PRO_0000097840" description="Cyclic pyranopterin monophosphate synthase">
    <location>
        <begin position="1"/>
        <end position="170"/>
    </location>
</feature>
<feature type="active site" evidence="1">
    <location>
        <position position="140"/>
    </location>
</feature>
<feature type="binding site" evidence="1">
    <location>
        <begin position="89"/>
        <end position="91"/>
    </location>
    <ligand>
        <name>substrate</name>
    </ligand>
</feature>
<feature type="binding site" evidence="1">
    <location>
        <begin position="125"/>
        <end position="126"/>
    </location>
    <ligand>
        <name>substrate</name>
    </ligand>
</feature>
<gene>
    <name evidence="1" type="primary">moaC</name>
    <name type="ordered locus">SCO3180</name>
    <name type="ORF">SCE87.31c</name>
</gene>
<reference key="1">
    <citation type="journal article" date="2002" name="Nature">
        <title>Complete genome sequence of the model actinomycete Streptomyces coelicolor A3(2).</title>
        <authorList>
            <person name="Bentley S.D."/>
            <person name="Chater K.F."/>
            <person name="Cerdeno-Tarraga A.-M."/>
            <person name="Challis G.L."/>
            <person name="Thomson N.R."/>
            <person name="James K.D."/>
            <person name="Harris D.E."/>
            <person name="Quail M.A."/>
            <person name="Kieser H."/>
            <person name="Harper D."/>
            <person name="Bateman A."/>
            <person name="Brown S."/>
            <person name="Chandra G."/>
            <person name="Chen C.W."/>
            <person name="Collins M."/>
            <person name="Cronin A."/>
            <person name="Fraser A."/>
            <person name="Goble A."/>
            <person name="Hidalgo J."/>
            <person name="Hornsby T."/>
            <person name="Howarth S."/>
            <person name="Huang C.-H."/>
            <person name="Kieser T."/>
            <person name="Larke L."/>
            <person name="Murphy L.D."/>
            <person name="Oliver K."/>
            <person name="O'Neil S."/>
            <person name="Rabbinowitsch E."/>
            <person name="Rajandream M.A."/>
            <person name="Rutherford K.M."/>
            <person name="Rutter S."/>
            <person name="Seeger K."/>
            <person name="Saunders D."/>
            <person name="Sharp S."/>
            <person name="Squares R."/>
            <person name="Squares S."/>
            <person name="Taylor K."/>
            <person name="Warren T."/>
            <person name="Wietzorrek A."/>
            <person name="Woodward J.R."/>
            <person name="Barrell B.G."/>
            <person name="Parkhill J."/>
            <person name="Hopwood D.A."/>
        </authorList>
    </citation>
    <scope>NUCLEOTIDE SEQUENCE [LARGE SCALE GENOMIC DNA]</scope>
    <source>
        <strain>ATCC BAA-471 / A3(2) / M145</strain>
    </source>
</reference>
<protein>
    <recommendedName>
        <fullName evidence="1">Cyclic pyranopterin monophosphate synthase</fullName>
        <ecNumber evidence="1">4.6.1.17</ecNumber>
    </recommendedName>
    <alternativeName>
        <fullName evidence="1">Molybdenum cofactor biosynthesis protein C</fullName>
    </alternativeName>
</protein>
<evidence type="ECO:0000255" key="1">
    <source>
        <dbReference type="HAMAP-Rule" id="MF_01224"/>
    </source>
</evidence>